<organism>
    <name type="scientific">Dryopteris crassirhizoma</name>
    <name type="common">Thick stemmed wood fern</name>
    <dbReference type="NCBI Taxonomy" id="97234"/>
    <lineage>
        <taxon>Eukaryota</taxon>
        <taxon>Viridiplantae</taxon>
        <taxon>Streptophyta</taxon>
        <taxon>Embryophyta</taxon>
        <taxon>Tracheophyta</taxon>
        <taxon>Polypodiopsida</taxon>
        <taxon>Polypodiidae</taxon>
        <taxon>Polypodiales</taxon>
        <taxon>Polypodiineae</taxon>
        <taxon>Dryopteridaceae</taxon>
        <taxon>Dryopteridoideae</taxon>
        <taxon>Dryopteris</taxon>
    </lineage>
</organism>
<evidence type="ECO:0000250" key="1">
    <source>
        <dbReference type="UniProtKB" id="P48449"/>
    </source>
</evidence>
<evidence type="ECO:0000269" key="2">
    <source>
    </source>
</evidence>
<evidence type="ECO:0000305" key="3"/>
<gene>
    <name type="primary">DCD</name>
</gene>
<comment type="function">
    <text evidence="2">Squalene cyclase producing the tetracyclic triterpene dammaradiene.</text>
</comment>
<comment type="catalytic activity">
    <reaction evidence="2">
        <text>squalene = dammara-20,24-diene</text>
        <dbReference type="Rhea" id="RHEA:31023"/>
        <dbReference type="ChEBI" id="CHEBI:15440"/>
        <dbReference type="ChEBI" id="CHEBI:62447"/>
        <dbReference type="EC" id="5.4.99.37"/>
    </reaction>
</comment>
<comment type="similarity">
    <text evidence="3">Belongs to the terpene cyclase/mutase family.</text>
</comment>
<feature type="chain" id="PRO_0000413961" description="Dammaradiene synthase">
    <location>
        <begin position="1"/>
        <end position="685"/>
    </location>
</feature>
<feature type="repeat" description="PFTB 1">
    <location>
        <begin position="82"/>
        <end position="123"/>
    </location>
</feature>
<feature type="repeat" description="PFTB 2">
    <location>
        <begin position="265"/>
        <end position="308"/>
    </location>
</feature>
<feature type="repeat" description="PFTB 3">
    <location>
        <begin position="424"/>
        <end position="465"/>
    </location>
</feature>
<feature type="repeat" description="PFTB 4">
    <location>
        <begin position="621"/>
        <end position="672"/>
    </location>
</feature>
<feature type="active site" description="Proton donor" evidence="1">
    <location>
        <position position="400"/>
    </location>
</feature>
<reference key="1">
    <citation type="journal article" date="2008" name="Phytochemistry">
        <title>Dammaradiene synthase, a squalene cyclase, from Dryopteris crassirhizoma Nakai.</title>
        <authorList>
            <person name="Shinozaki J."/>
            <person name="Shibuya M."/>
            <person name="Masuda K."/>
            <person name="Ebizuka Y."/>
        </authorList>
    </citation>
    <scope>NUCLEOTIDE SEQUENCE [MRNA]</scope>
    <scope>FUNCTION</scope>
    <scope>CATALYTIC ACTIVITY</scope>
</reference>
<protein>
    <recommendedName>
        <fullName>Dammaradiene synthase</fullName>
        <ecNumber>5.4.99.37</ecNumber>
    </recommendedName>
</protein>
<name>DCD_DRYCA</name>
<accession>B3Y522</accession>
<sequence>MLPYNQDFYNEDEALKDDHCEGAGNVSNPPTLDEAIKRSQDFLLSQQYPEGYWWAELEGNPTITSHTVILYKILGIEDEYPMDKMEKYLRRMQCIHGGWELFYGDGGQLSVTIESYVALRLLNVPPTDPALKKALKFIIDKGGVXKSRMFTKICLALLGCFDWRGIPSLPPWVMLLPGWFLSSIYETACWARGCVVPLIVVFDKKPVFKVSPEVSFDELYAEGREHACKTLPFCGDWTSHFFIAVDRVFKMMERLGVVPFQQWGIREAEKWLLERQEDTGDFLGVYPPMFYSVVCMKTLGYEVTDPVVRRALLSFKKFSIERADECSVQSSLSPVWDTALVVRSLVESGLPPDHPALQRAGEWLLQKQITKHGDWSFKNQSGVAGGWAFQFFNRWYPDLDDSAVVVMALDCLKLPNEDVKNGAITRCLKWISSMQCKGGGWAAFDKDNHQHWINSTPFSDLKAMVDPSTTDISARVLEMVGRLKLHGTSFDEAHFLPPESIARGLVYLRREQENEGCWFGRWGVNYIYGTCGALVALSLVAPMTHEEEIARGARWLVQVQNMHGKKINGPQDGGWGETCFSYNDPALKGQGDVSTASQTAWALQGLLAAGDALGKYEVESIGHGVQYLLSTQRKDGSWHESQFTGGGFPIHFYLRYHFYAQHFTLSSLARYRTRLQASKIKPPIP</sequence>
<keyword id="KW-0413">Isomerase</keyword>
<keyword id="KW-0677">Repeat</keyword>
<proteinExistence type="evidence at protein level"/>
<dbReference type="EC" id="5.4.99.37"/>
<dbReference type="EMBL" id="AB429303">
    <property type="protein sequence ID" value="BAG68223.1"/>
    <property type="molecule type" value="mRNA"/>
</dbReference>
<dbReference type="KEGG" id="ag:BAG68223"/>
<dbReference type="BioCyc" id="MetaCyc:MONOMER-14418"/>
<dbReference type="BRENDA" id="5.4.99.37">
    <property type="organism ID" value="12245"/>
</dbReference>
<dbReference type="GO" id="GO:0005811">
    <property type="term" value="C:lipid droplet"/>
    <property type="evidence" value="ECO:0007669"/>
    <property type="project" value="InterPro"/>
</dbReference>
<dbReference type="GO" id="GO:0016866">
    <property type="term" value="F:intramolecular transferase activity"/>
    <property type="evidence" value="ECO:0007669"/>
    <property type="project" value="InterPro"/>
</dbReference>
<dbReference type="GO" id="GO:0016104">
    <property type="term" value="P:triterpenoid biosynthetic process"/>
    <property type="evidence" value="ECO:0007669"/>
    <property type="project" value="InterPro"/>
</dbReference>
<dbReference type="CDD" id="cd02892">
    <property type="entry name" value="SQCY_1"/>
    <property type="match status" value="1"/>
</dbReference>
<dbReference type="Gene3D" id="1.50.10.20">
    <property type="match status" value="2"/>
</dbReference>
<dbReference type="InterPro" id="IPR006400">
    <property type="entry name" value="Hopene-cyclase"/>
</dbReference>
<dbReference type="InterPro" id="IPR032696">
    <property type="entry name" value="SQ_cyclase_C"/>
</dbReference>
<dbReference type="InterPro" id="IPR032697">
    <property type="entry name" value="SQ_cyclase_N"/>
</dbReference>
<dbReference type="InterPro" id="IPR018333">
    <property type="entry name" value="Squalene_cyclase"/>
</dbReference>
<dbReference type="InterPro" id="IPR008930">
    <property type="entry name" value="Terpenoid_cyclase/PrenylTrfase"/>
</dbReference>
<dbReference type="NCBIfam" id="TIGR01507">
    <property type="entry name" value="hopene_cyclase"/>
    <property type="match status" value="1"/>
</dbReference>
<dbReference type="NCBIfam" id="TIGR01787">
    <property type="entry name" value="squalene_cyclas"/>
    <property type="match status" value="1"/>
</dbReference>
<dbReference type="PANTHER" id="PTHR11764:SF20">
    <property type="entry name" value="LANOSTEROL SYNTHASE"/>
    <property type="match status" value="1"/>
</dbReference>
<dbReference type="PANTHER" id="PTHR11764">
    <property type="entry name" value="TERPENE CYCLASE/MUTASE FAMILY MEMBER"/>
    <property type="match status" value="1"/>
</dbReference>
<dbReference type="Pfam" id="PF13243">
    <property type="entry name" value="SQHop_cyclase_C"/>
    <property type="match status" value="1"/>
</dbReference>
<dbReference type="Pfam" id="PF13249">
    <property type="entry name" value="SQHop_cyclase_N"/>
    <property type="match status" value="1"/>
</dbReference>
<dbReference type="SFLD" id="SFLDG01016">
    <property type="entry name" value="Prenyltransferase_Like_2"/>
    <property type="match status" value="1"/>
</dbReference>
<dbReference type="SUPFAM" id="SSF48239">
    <property type="entry name" value="Terpenoid cyclases/Protein prenyltransferases"/>
    <property type="match status" value="2"/>
</dbReference>